<protein>
    <recommendedName>
        <fullName evidence="1">Probable tRNA pseudouridine synthase D</fullName>
        <ecNumber evidence="1">5.4.99.27</ecNumber>
    </recommendedName>
    <alternativeName>
        <fullName evidence="1">tRNA pseudouridine(13) synthase</fullName>
    </alternativeName>
    <alternativeName>
        <fullName evidence="1">tRNA pseudouridylate synthase D</fullName>
    </alternativeName>
    <alternativeName>
        <fullName evidence="1">tRNA-uridine isomerase D</fullName>
    </alternativeName>
</protein>
<proteinExistence type="inferred from homology"/>
<gene>
    <name evidence="1" type="primary">truD</name>
    <name type="ordered locus">SSO0174</name>
</gene>
<accession>Q980V2</accession>
<dbReference type="EC" id="5.4.99.27" evidence="1"/>
<dbReference type="EMBL" id="AE006641">
    <property type="protein sequence ID" value="AAK40520.1"/>
    <property type="molecule type" value="Genomic_DNA"/>
</dbReference>
<dbReference type="PIR" id="A90158">
    <property type="entry name" value="A90158"/>
</dbReference>
<dbReference type="RefSeq" id="WP_009990399.1">
    <property type="nucleotide sequence ID" value="NC_002754.1"/>
</dbReference>
<dbReference type="SMR" id="Q980V2"/>
<dbReference type="FunCoup" id="Q980V2">
    <property type="interactions" value="37"/>
</dbReference>
<dbReference type="STRING" id="273057.SSO0174"/>
<dbReference type="PaxDb" id="273057-SSO0174"/>
<dbReference type="EnsemblBacteria" id="AAK40520">
    <property type="protein sequence ID" value="AAK40520"/>
    <property type="gene ID" value="SSO0174"/>
</dbReference>
<dbReference type="GeneID" id="44129140"/>
<dbReference type="KEGG" id="sso:SSO0174"/>
<dbReference type="PATRIC" id="fig|273057.12.peg.170"/>
<dbReference type="eggNOG" id="arCOG04252">
    <property type="taxonomic scope" value="Archaea"/>
</dbReference>
<dbReference type="HOGENOM" id="CLU_005281_4_1_2"/>
<dbReference type="InParanoid" id="Q980V2"/>
<dbReference type="PhylomeDB" id="Q980V2"/>
<dbReference type="Proteomes" id="UP000001974">
    <property type="component" value="Chromosome"/>
</dbReference>
<dbReference type="GO" id="GO:0009982">
    <property type="term" value="F:pseudouridine synthase activity"/>
    <property type="evidence" value="ECO:0000318"/>
    <property type="project" value="GO_Central"/>
</dbReference>
<dbReference type="GO" id="GO:0003723">
    <property type="term" value="F:RNA binding"/>
    <property type="evidence" value="ECO:0007669"/>
    <property type="project" value="InterPro"/>
</dbReference>
<dbReference type="GO" id="GO:0160150">
    <property type="term" value="F:tRNA pseudouridine(13) synthase activity"/>
    <property type="evidence" value="ECO:0007669"/>
    <property type="project" value="UniProtKB-EC"/>
</dbReference>
<dbReference type="GO" id="GO:0001522">
    <property type="term" value="P:pseudouridine synthesis"/>
    <property type="evidence" value="ECO:0000318"/>
    <property type="project" value="GO_Central"/>
</dbReference>
<dbReference type="GO" id="GO:0031119">
    <property type="term" value="P:tRNA pseudouridine synthesis"/>
    <property type="evidence" value="ECO:0007669"/>
    <property type="project" value="UniProtKB-UniRule"/>
</dbReference>
<dbReference type="FunFam" id="3.30.70.3160:FF:000001">
    <property type="entry name" value="Probable tRNA pseudouridine synthase D"/>
    <property type="match status" value="1"/>
</dbReference>
<dbReference type="Gene3D" id="1.10.1510.30">
    <property type="match status" value="1"/>
</dbReference>
<dbReference type="Gene3D" id="3.30.70.3160">
    <property type="match status" value="1"/>
</dbReference>
<dbReference type="Gene3D" id="3.30.2350.20">
    <property type="entry name" value="TruD, catalytic domain"/>
    <property type="match status" value="1"/>
</dbReference>
<dbReference type="HAMAP" id="MF_01082">
    <property type="entry name" value="TruD"/>
    <property type="match status" value="1"/>
</dbReference>
<dbReference type="InterPro" id="IPR020103">
    <property type="entry name" value="PsdUridine_synth_cat_dom_sf"/>
</dbReference>
<dbReference type="InterPro" id="IPR001656">
    <property type="entry name" value="PsdUridine_synth_TruD"/>
</dbReference>
<dbReference type="InterPro" id="IPR020119">
    <property type="entry name" value="PsdUridine_synth_TruD_CS"/>
</dbReference>
<dbReference type="InterPro" id="IPR011760">
    <property type="entry name" value="PsdUridine_synth_TruD_insert"/>
</dbReference>
<dbReference type="InterPro" id="IPR042214">
    <property type="entry name" value="TruD_catalytic"/>
</dbReference>
<dbReference type="PANTHER" id="PTHR13326:SF21">
    <property type="entry name" value="PSEUDOURIDYLATE SYNTHASE PUS7L"/>
    <property type="match status" value="1"/>
</dbReference>
<dbReference type="PANTHER" id="PTHR13326">
    <property type="entry name" value="TRNA PSEUDOURIDINE SYNTHASE D"/>
    <property type="match status" value="1"/>
</dbReference>
<dbReference type="Pfam" id="PF01142">
    <property type="entry name" value="TruD"/>
    <property type="match status" value="2"/>
</dbReference>
<dbReference type="SUPFAM" id="SSF55120">
    <property type="entry name" value="Pseudouridine synthase"/>
    <property type="match status" value="1"/>
</dbReference>
<dbReference type="PROSITE" id="PS50984">
    <property type="entry name" value="TRUD"/>
    <property type="match status" value="1"/>
</dbReference>
<dbReference type="PROSITE" id="PS01268">
    <property type="entry name" value="UPF0024"/>
    <property type="match status" value="1"/>
</dbReference>
<feature type="chain" id="PRO_0000152554" description="Probable tRNA pseudouridine synthase D">
    <location>
        <begin position="1"/>
        <end position="377"/>
    </location>
</feature>
<feature type="domain" description="TRUD" evidence="1">
    <location>
        <begin position="160"/>
        <end position="377"/>
    </location>
</feature>
<feature type="active site" description="Nucleophile" evidence="1">
    <location>
        <position position="89"/>
    </location>
</feature>
<sequence>MTPHEIDIALGMEKYYYEDWNELDGTIERPNGFKVIEEIDFKPAQDWKGETKGKYAVFLLTKWGIDHFSAISEVQKVLHSKVNYIGIKDANAITSQLVYIPLNEKQELIEKYQSRSFILKFLGFSSKKLNHTGNIFEISLSISDFDIVIERIEQIKKNPYLPAFIGYQRFGTRRPITHLIGKYLLRRDWEKAFYLILTYPFLSESKETIDIRKLIMEGDFKEAVRSIPSKFKQEKLLLKNYMRFNSYYLALKSSFIPISLYLDAYQSYLFNLYLSRKLDEYKNLNDKVNLLIRIPIYFNNCDDVCKEIYLDEGIERNFFKLQEFKISLRDLVRKAFMNIRDLKVNEETKTISFVLERGMYATILLREILRGDPRKFT</sequence>
<name>TRUD_SACS2</name>
<reference key="1">
    <citation type="journal article" date="2001" name="Proc. Natl. Acad. Sci. U.S.A.">
        <title>The complete genome of the crenarchaeon Sulfolobus solfataricus P2.</title>
        <authorList>
            <person name="She Q."/>
            <person name="Singh R.K."/>
            <person name="Confalonieri F."/>
            <person name="Zivanovic Y."/>
            <person name="Allard G."/>
            <person name="Awayez M.J."/>
            <person name="Chan-Weiher C.C.-Y."/>
            <person name="Clausen I.G."/>
            <person name="Curtis B.A."/>
            <person name="De Moors A."/>
            <person name="Erauso G."/>
            <person name="Fletcher C."/>
            <person name="Gordon P.M.K."/>
            <person name="Heikamp-de Jong I."/>
            <person name="Jeffries A.C."/>
            <person name="Kozera C.J."/>
            <person name="Medina N."/>
            <person name="Peng X."/>
            <person name="Thi-Ngoc H.P."/>
            <person name="Redder P."/>
            <person name="Schenk M.E."/>
            <person name="Theriault C."/>
            <person name="Tolstrup N."/>
            <person name="Charlebois R.L."/>
            <person name="Doolittle W.F."/>
            <person name="Duguet M."/>
            <person name="Gaasterland T."/>
            <person name="Garrett R.A."/>
            <person name="Ragan M.A."/>
            <person name="Sensen C.W."/>
            <person name="Van der Oost J."/>
        </authorList>
    </citation>
    <scope>NUCLEOTIDE SEQUENCE [LARGE SCALE GENOMIC DNA]</scope>
    <source>
        <strain>ATCC 35092 / DSM 1617 / JCM 11322 / P2</strain>
    </source>
</reference>
<evidence type="ECO:0000255" key="1">
    <source>
        <dbReference type="HAMAP-Rule" id="MF_01082"/>
    </source>
</evidence>
<comment type="function">
    <text evidence="1">Could be responsible for synthesis of pseudouridine from uracil-13 in transfer RNAs.</text>
</comment>
<comment type="catalytic activity">
    <reaction evidence="1">
        <text>uridine(13) in tRNA = pseudouridine(13) in tRNA</text>
        <dbReference type="Rhea" id="RHEA:42540"/>
        <dbReference type="Rhea" id="RHEA-COMP:10105"/>
        <dbReference type="Rhea" id="RHEA-COMP:10106"/>
        <dbReference type="ChEBI" id="CHEBI:65314"/>
        <dbReference type="ChEBI" id="CHEBI:65315"/>
        <dbReference type="EC" id="5.4.99.27"/>
    </reaction>
</comment>
<comment type="similarity">
    <text evidence="1">Belongs to the pseudouridine synthase TruD family.</text>
</comment>
<keyword id="KW-0413">Isomerase</keyword>
<keyword id="KW-1185">Reference proteome</keyword>
<keyword id="KW-0819">tRNA processing</keyword>
<organism>
    <name type="scientific">Saccharolobus solfataricus (strain ATCC 35092 / DSM 1617 / JCM 11322 / P2)</name>
    <name type="common">Sulfolobus solfataricus</name>
    <dbReference type="NCBI Taxonomy" id="273057"/>
    <lineage>
        <taxon>Archaea</taxon>
        <taxon>Thermoproteota</taxon>
        <taxon>Thermoprotei</taxon>
        <taxon>Sulfolobales</taxon>
        <taxon>Sulfolobaceae</taxon>
        <taxon>Saccharolobus</taxon>
    </lineage>
</organism>